<protein>
    <recommendedName>
        <fullName evidence="1">NAD(P)H-quinone oxidoreductase subunit 4L, chloroplastic</fullName>
        <ecNumber evidence="1">7.1.1.-</ecNumber>
    </recommendedName>
    <alternativeName>
        <fullName evidence="1">NAD(P)H dehydrogenase subunit 4L</fullName>
    </alternativeName>
    <alternativeName>
        <fullName evidence="1">NADH-plastoquinone oxidoreductase subunit 4L</fullName>
    </alternativeName>
</protein>
<name>NU4LC_PANGI</name>
<sequence length="101" mass="11229">MMLEHVLVLSAYLFSVGLYGLITSRNMVRALMCLELILNAVNINFVTFSDFFDSRQLKGAIFSIFVIAIAAAEAAIGLAIVSSIYRNRKSIRINQSNLLNK</sequence>
<feature type="chain" id="PRO_0000360357" description="NAD(P)H-quinone oxidoreductase subunit 4L, chloroplastic">
    <location>
        <begin position="1"/>
        <end position="101"/>
    </location>
</feature>
<feature type="transmembrane region" description="Helical" evidence="1">
    <location>
        <begin position="2"/>
        <end position="22"/>
    </location>
</feature>
<feature type="transmembrane region" description="Helical" evidence="1">
    <location>
        <begin position="32"/>
        <end position="52"/>
    </location>
</feature>
<feature type="transmembrane region" description="Helical" evidence="1">
    <location>
        <begin position="61"/>
        <end position="81"/>
    </location>
</feature>
<keyword id="KW-0150">Chloroplast</keyword>
<keyword id="KW-0472">Membrane</keyword>
<keyword id="KW-0520">NAD</keyword>
<keyword id="KW-0521">NADP</keyword>
<keyword id="KW-0934">Plastid</keyword>
<keyword id="KW-0618">Plastoquinone</keyword>
<keyword id="KW-0874">Quinone</keyword>
<keyword id="KW-0793">Thylakoid</keyword>
<keyword id="KW-1278">Translocase</keyword>
<keyword id="KW-0812">Transmembrane</keyword>
<keyword id="KW-1133">Transmembrane helix</keyword>
<keyword id="KW-0813">Transport</keyword>
<comment type="function">
    <text evidence="1">NDH shuttles electrons from NAD(P)H:plastoquinone, via FMN and iron-sulfur (Fe-S) centers, to quinones in the photosynthetic chain and possibly in a chloroplast respiratory chain. The immediate electron acceptor for the enzyme in this species is believed to be plastoquinone. Couples the redox reaction to proton translocation, and thus conserves the redox energy in a proton gradient.</text>
</comment>
<comment type="catalytic activity">
    <reaction evidence="1">
        <text>a plastoquinone + NADH + (n+1) H(+)(in) = a plastoquinol + NAD(+) + n H(+)(out)</text>
        <dbReference type="Rhea" id="RHEA:42608"/>
        <dbReference type="Rhea" id="RHEA-COMP:9561"/>
        <dbReference type="Rhea" id="RHEA-COMP:9562"/>
        <dbReference type="ChEBI" id="CHEBI:15378"/>
        <dbReference type="ChEBI" id="CHEBI:17757"/>
        <dbReference type="ChEBI" id="CHEBI:57540"/>
        <dbReference type="ChEBI" id="CHEBI:57945"/>
        <dbReference type="ChEBI" id="CHEBI:62192"/>
    </reaction>
</comment>
<comment type="catalytic activity">
    <reaction evidence="1">
        <text>a plastoquinone + NADPH + (n+1) H(+)(in) = a plastoquinol + NADP(+) + n H(+)(out)</text>
        <dbReference type="Rhea" id="RHEA:42612"/>
        <dbReference type="Rhea" id="RHEA-COMP:9561"/>
        <dbReference type="Rhea" id="RHEA-COMP:9562"/>
        <dbReference type="ChEBI" id="CHEBI:15378"/>
        <dbReference type="ChEBI" id="CHEBI:17757"/>
        <dbReference type="ChEBI" id="CHEBI:57783"/>
        <dbReference type="ChEBI" id="CHEBI:58349"/>
        <dbReference type="ChEBI" id="CHEBI:62192"/>
    </reaction>
</comment>
<comment type="subunit">
    <text evidence="1">NDH is composed of at least 16 different subunits, 5 of which are encoded in the nucleus.</text>
</comment>
<comment type="subcellular location">
    <subcellularLocation>
        <location evidence="1">Plastid</location>
        <location evidence="1">Chloroplast thylakoid membrane</location>
        <topology evidence="1">Multi-pass membrane protein</topology>
    </subcellularLocation>
</comment>
<comment type="similarity">
    <text evidence="1">Belongs to the complex I subunit 4L family.</text>
</comment>
<gene>
    <name evidence="1" type="primary">ndhE</name>
    <name type="ORF">PSC1200</name>
</gene>
<reference key="1">
    <citation type="journal article" date="2004" name="DNA Res.">
        <title>Complete chloroplast genome sequence from Korea ginseng (Panax schinseng Nees) and comparative analysis of sequence evolution among 17 vascular plants.</title>
        <authorList>
            <person name="Kim K.-J."/>
            <person name="Lee H.-L."/>
        </authorList>
    </citation>
    <scope>NUCLEOTIDE SEQUENCE [LARGE SCALE GENOMIC DNA]</scope>
</reference>
<dbReference type="EC" id="7.1.1.-" evidence="1"/>
<dbReference type="EMBL" id="AY582139">
    <property type="protein sequence ID" value="AAT98562.1"/>
    <property type="molecule type" value="Genomic_DNA"/>
</dbReference>
<dbReference type="RefSeq" id="YP_087018.1">
    <property type="nucleotide sequence ID" value="NC_006290.1"/>
</dbReference>
<dbReference type="SMR" id="Q68RV4"/>
<dbReference type="GeneID" id="3021553"/>
<dbReference type="GO" id="GO:0009535">
    <property type="term" value="C:chloroplast thylakoid membrane"/>
    <property type="evidence" value="ECO:0007669"/>
    <property type="project" value="UniProtKB-SubCell"/>
</dbReference>
<dbReference type="GO" id="GO:0030964">
    <property type="term" value="C:NADH dehydrogenase complex"/>
    <property type="evidence" value="ECO:0007669"/>
    <property type="project" value="TreeGrafter"/>
</dbReference>
<dbReference type="GO" id="GO:0016655">
    <property type="term" value="F:oxidoreductase activity, acting on NAD(P)H, quinone or similar compound as acceptor"/>
    <property type="evidence" value="ECO:0007669"/>
    <property type="project" value="UniProtKB-UniRule"/>
</dbReference>
<dbReference type="GO" id="GO:0048038">
    <property type="term" value="F:quinone binding"/>
    <property type="evidence" value="ECO:0007669"/>
    <property type="project" value="UniProtKB-KW"/>
</dbReference>
<dbReference type="GO" id="GO:0042773">
    <property type="term" value="P:ATP synthesis coupled electron transport"/>
    <property type="evidence" value="ECO:0007669"/>
    <property type="project" value="InterPro"/>
</dbReference>
<dbReference type="GO" id="GO:0019684">
    <property type="term" value="P:photosynthesis, light reaction"/>
    <property type="evidence" value="ECO:0007669"/>
    <property type="project" value="UniProtKB-UniRule"/>
</dbReference>
<dbReference type="FunFam" id="1.10.287.3510:FF:000001">
    <property type="entry name" value="NADH-quinone oxidoreductase subunit K"/>
    <property type="match status" value="1"/>
</dbReference>
<dbReference type="Gene3D" id="1.10.287.3510">
    <property type="match status" value="1"/>
</dbReference>
<dbReference type="HAMAP" id="MF_01456">
    <property type="entry name" value="NDH1_NuoK"/>
    <property type="match status" value="1"/>
</dbReference>
<dbReference type="InterPro" id="IPR001133">
    <property type="entry name" value="NADH_UbQ_OxRdtase_chain4L/K"/>
</dbReference>
<dbReference type="InterPro" id="IPR039428">
    <property type="entry name" value="NUOK/Mnh_C1-like"/>
</dbReference>
<dbReference type="NCBIfam" id="NF004320">
    <property type="entry name" value="PRK05715.1-2"/>
    <property type="match status" value="1"/>
</dbReference>
<dbReference type="NCBIfam" id="NF004322">
    <property type="entry name" value="PRK05715.1-4"/>
    <property type="match status" value="1"/>
</dbReference>
<dbReference type="NCBIfam" id="NF004323">
    <property type="entry name" value="PRK05715.1-5"/>
    <property type="match status" value="1"/>
</dbReference>
<dbReference type="PANTHER" id="PTHR11434:SF16">
    <property type="entry name" value="NADH-UBIQUINONE OXIDOREDUCTASE CHAIN 4L"/>
    <property type="match status" value="1"/>
</dbReference>
<dbReference type="PANTHER" id="PTHR11434">
    <property type="entry name" value="NADH-UBIQUINONE OXIDOREDUCTASE SUBUNIT ND4L"/>
    <property type="match status" value="1"/>
</dbReference>
<dbReference type="Pfam" id="PF00420">
    <property type="entry name" value="Oxidored_q2"/>
    <property type="match status" value="1"/>
</dbReference>
<evidence type="ECO:0000255" key="1">
    <source>
        <dbReference type="HAMAP-Rule" id="MF_01456"/>
    </source>
</evidence>
<organism>
    <name type="scientific">Panax ginseng</name>
    <name type="common">Korean ginseng</name>
    <dbReference type="NCBI Taxonomy" id="4054"/>
    <lineage>
        <taxon>Eukaryota</taxon>
        <taxon>Viridiplantae</taxon>
        <taxon>Streptophyta</taxon>
        <taxon>Embryophyta</taxon>
        <taxon>Tracheophyta</taxon>
        <taxon>Spermatophyta</taxon>
        <taxon>Magnoliopsida</taxon>
        <taxon>eudicotyledons</taxon>
        <taxon>Gunneridae</taxon>
        <taxon>Pentapetalae</taxon>
        <taxon>asterids</taxon>
        <taxon>campanulids</taxon>
        <taxon>Apiales</taxon>
        <taxon>Araliaceae</taxon>
        <taxon>Panax</taxon>
    </lineage>
</organism>
<geneLocation type="chloroplast"/>
<accession>Q68RV4</accession>
<proteinExistence type="inferred from homology"/>